<feature type="chain" id="PRO_0000211688" description="Cell division protein ZapD">
    <location>
        <begin position="1"/>
        <end position="250"/>
    </location>
</feature>
<comment type="function">
    <text evidence="1">Cell division factor that enhances FtsZ-ring assembly. Directly interacts with FtsZ and promotes bundling of FtsZ protofilaments, with a reduction in FtsZ GTPase activity.</text>
</comment>
<comment type="subunit">
    <text evidence="1">Interacts with FtsZ.</text>
</comment>
<comment type="subcellular location">
    <subcellularLocation>
        <location evidence="1">Cytoplasm</location>
    </subcellularLocation>
    <text evidence="1">Localizes to mid-cell in an FtsZ-dependent manner.</text>
</comment>
<comment type="similarity">
    <text evidence="1">Belongs to the ZapD family.</text>
</comment>
<reference key="1">
    <citation type="journal article" date="2004" name="Proc. Natl. Acad. Sci. U.S.A.">
        <title>Insights into the evolution of Yersinia pestis through whole-genome comparison with Yersinia pseudotuberculosis.</title>
        <authorList>
            <person name="Chain P.S.G."/>
            <person name="Carniel E."/>
            <person name="Larimer F.W."/>
            <person name="Lamerdin J."/>
            <person name="Stoutland P.O."/>
            <person name="Regala W.M."/>
            <person name="Georgescu A.M."/>
            <person name="Vergez L.M."/>
            <person name="Land M.L."/>
            <person name="Motin V.L."/>
            <person name="Brubaker R.R."/>
            <person name="Fowler J."/>
            <person name="Hinnebusch J."/>
            <person name="Marceau M."/>
            <person name="Medigue C."/>
            <person name="Simonet M."/>
            <person name="Chenal-Francisque V."/>
            <person name="Souza B."/>
            <person name="Dacheux D."/>
            <person name="Elliott J.M."/>
            <person name="Derbise A."/>
            <person name="Hauser L.J."/>
            <person name="Garcia E."/>
        </authorList>
    </citation>
    <scope>NUCLEOTIDE SEQUENCE [LARGE SCALE GENOMIC DNA]</scope>
    <source>
        <strain>IP32953</strain>
    </source>
</reference>
<keyword id="KW-0131">Cell cycle</keyword>
<keyword id="KW-0132">Cell division</keyword>
<keyword id="KW-0963">Cytoplasm</keyword>
<keyword id="KW-0717">Septation</keyword>
<name>ZAPD_YERPS</name>
<accession>Q66EJ2</accession>
<organism>
    <name type="scientific">Yersinia pseudotuberculosis serotype I (strain IP32953)</name>
    <dbReference type="NCBI Taxonomy" id="273123"/>
    <lineage>
        <taxon>Bacteria</taxon>
        <taxon>Pseudomonadati</taxon>
        <taxon>Pseudomonadota</taxon>
        <taxon>Gammaproteobacteria</taxon>
        <taxon>Enterobacterales</taxon>
        <taxon>Yersiniaceae</taxon>
        <taxon>Yersinia</taxon>
    </lineage>
</organism>
<proteinExistence type="inferred from homology"/>
<dbReference type="EMBL" id="BX936398">
    <property type="protein sequence ID" value="CAH19941.1"/>
    <property type="molecule type" value="Genomic_DNA"/>
</dbReference>
<dbReference type="RefSeq" id="WP_002209318.1">
    <property type="nucleotide sequence ID" value="NZ_CP009712.1"/>
</dbReference>
<dbReference type="SMR" id="Q66EJ2"/>
<dbReference type="GeneID" id="57975279"/>
<dbReference type="KEGG" id="ypo:BZ17_1854"/>
<dbReference type="KEGG" id="yps:YPTB0701"/>
<dbReference type="PATRIC" id="fig|273123.14.peg.1968"/>
<dbReference type="Proteomes" id="UP000001011">
    <property type="component" value="Chromosome"/>
</dbReference>
<dbReference type="GO" id="GO:0032153">
    <property type="term" value="C:cell division site"/>
    <property type="evidence" value="ECO:0007669"/>
    <property type="project" value="TreeGrafter"/>
</dbReference>
<dbReference type="GO" id="GO:0005737">
    <property type="term" value="C:cytoplasm"/>
    <property type="evidence" value="ECO:0007669"/>
    <property type="project" value="UniProtKB-SubCell"/>
</dbReference>
<dbReference type="GO" id="GO:0000917">
    <property type="term" value="P:division septum assembly"/>
    <property type="evidence" value="ECO:0007669"/>
    <property type="project" value="UniProtKB-KW"/>
</dbReference>
<dbReference type="GO" id="GO:0043093">
    <property type="term" value="P:FtsZ-dependent cytokinesis"/>
    <property type="evidence" value="ECO:0007669"/>
    <property type="project" value="UniProtKB-UniRule"/>
</dbReference>
<dbReference type="FunFam" id="1.10.3900.10:FF:000001">
    <property type="entry name" value="Cell division protein ZapD"/>
    <property type="match status" value="1"/>
</dbReference>
<dbReference type="FunFam" id="2.60.440.10:FF:000001">
    <property type="entry name" value="Cell division protein ZapD"/>
    <property type="match status" value="1"/>
</dbReference>
<dbReference type="Gene3D" id="1.10.3900.10">
    <property type="entry name" value="YacF-like"/>
    <property type="match status" value="1"/>
</dbReference>
<dbReference type="Gene3D" id="2.60.440.10">
    <property type="entry name" value="YacF-like domains"/>
    <property type="match status" value="1"/>
</dbReference>
<dbReference type="HAMAP" id="MF_01092">
    <property type="entry name" value="ZapD"/>
    <property type="match status" value="1"/>
</dbReference>
<dbReference type="InterPro" id="IPR009777">
    <property type="entry name" value="ZapD"/>
</dbReference>
<dbReference type="InterPro" id="IPR027462">
    <property type="entry name" value="ZapD_C"/>
</dbReference>
<dbReference type="InterPro" id="IPR036268">
    <property type="entry name" value="ZapD_sf"/>
</dbReference>
<dbReference type="NCBIfam" id="NF003653">
    <property type="entry name" value="PRK05287.1-1"/>
    <property type="match status" value="1"/>
</dbReference>
<dbReference type="NCBIfam" id="NF003655">
    <property type="entry name" value="PRK05287.1-3"/>
    <property type="match status" value="1"/>
</dbReference>
<dbReference type="PANTHER" id="PTHR39455">
    <property type="entry name" value="CELL DIVISION PROTEIN ZAPD"/>
    <property type="match status" value="1"/>
</dbReference>
<dbReference type="PANTHER" id="PTHR39455:SF1">
    <property type="entry name" value="CELL DIVISION PROTEIN ZAPD"/>
    <property type="match status" value="1"/>
</dbReference>
<dbReference type="Pfam" id="PF07072">
    <property type="entry name" value="ZapD"/>
    <property type="match status" value="1"/>
</dbReference>
<dbReference type="SUPFAM" id="SSF160950">
    <property type="entry name" value="YacF-like"/>
    <property type="match status" value="1"/>
</dbReference>
<gene>
    <name evidence="1" type="primary">zapD</name>
    <name type="ordered locus">YPTB0701</name>
</gene>
<protein>
    <recommendedName>
        <fullName evidence="1">Cell division protein ZapD</fullName>
    </recommendedName>
    <alternativeName>
        <fullName evidence="1">Z ring-associated protein D</fullName>
    </alternativeName>
</protein>
<evidence type="ECO:0000255" key="1">
    <source>
        <dbReference type="HAMAP-Rule" id="MF_01092"/>
    </source>
</evidence>
<sequence>MSDLTSTILFEHPLNEKMRTWLRMEFLLQQLESHRSLDNIANALTFFRTASDLIDVLERGEVRTDLLKELERQQQKLQQWADIPGVDVSLVDSLRNQLKSRAAVLMSAPRIGQSLKEDRLISVVRQRLSIPGGCCSFDLPTLHVWLHQPSEQRDQHINKLLASLAPLHQSLTIILDLIRQSCPLRSQISLNGFFQDNAGGADLLRLRLPLDPQLYPQISGHKTRYAIRFLALDSENGTVPARLSFELACC</sequence>